<reference key="1">
    <citation type="journal article" date="2000" name="Mol. Microbiol.">
        <title>Pathways for the utilization of N-acetyl-galactosamine and galactosamine in Escherichia coli.</title>
        <authorList>
            <person name="Brinkkoetter A."/>
            <person name="Kloess H."/>
            <person name="Alpert C.-A."/>
            <person name="Lengeler J.W."/>
        </authorList>
    </citation>
    <scope>NUCLEOTIDE SEQUENCE [GENOMIC DNA]</scope>
    <source>
        <strain>C</strain>
    </source>
</reference>
<reference key="2">
    <citation type="journal article" date="1997" name="Science">
        <title>The complete genome sequence of Escherichia coli K-12.</title>
        <authorList>
            <person name="Blattner F.R."/>
            <person name="Plunkett G. III"/>
            <person name="Bloch C.A."/>
            <person name="Perna N.T."/>
            <person name="Burland V."/>
            <person name="Riley M."/>
            <person name="Collado-Vides J."/>
            <person name="Glasner J.D."/>
            <person name="Rode C.K."/>
            <person name="Mayhew G.F."/>
            <person name="Gregor J."/>
            <person name="Davis N.W."/>
            <person name="Kirkpatrick H.A."/>
            <person name="Goeden M.A."/>
            <person name="Rose D.J."/>
            <person name="Mau B."/>
            <person name="Shao Y."/>
        </authorList>
    </citation>
    <scope>NUCLEOTIDE SEQUENCE [LARGE SCALE GENOMIC DNA]</scope>
    <source>
        <strain>K12 / MG1655 / ATCC 47076</strain>
    </source>
</reference>
<reference key="3">
    <citation type="journal article" date="2006" name="Mol. Syst. Biol.">
        <title>Highly accurate genome sequences of Escherichia coli K-12 strains MG1655 and W3110.</title>
        <authorList>
            <person name="Hayashi K."/>
            <person name="Morooka N."/>
            <person name="Yamamoto Y."/>
            <person name="Fujita K."/>
            <person name="Isono K."/>
            <person name="Choi S."/>
            <person name="Ohtsubo E."/>
            <person name="Baba T."/>
            <person name="Wanner B.L."/>
            <person name="Mori H."/>
            <person name="Horiuchi T."/>
        </authorList>
    </citation>
    <scope>NUCLEOTIDE SEQUENCE [LARGE SCALE GENOMIC DNA]</scope>
    <source>
        <strain>K12 / W3110 / ATCC 27325 / DSM 5911</strain>
    </source>
</reference>
<reference key="4">
    <citation type="journal article" date="1996" name="Microbiology">
        <title>Novel phosphotransferase genes revealed by bacterial genome sequencing: a gene cluster encoding a putative N-acetylgalactosamine metabolic pathway in Escherichia coli.</title>
        <authorList>
            <person name="Reizer J."/>
            <person name="Ramseier T.M."/>
            <person name="Reizer A."/>
            <person name="Charbit A."/>
            <person name="Saier M.H. Jr."/>
        </authorList>
    </citation>
    <scope>DISCUSSION OF SEQUENCE</scope>
</reference>
<reference key="5">
    <citation type="journal article" date="2005" name="Science">
        <title>Global topology analysis of the Escherichia coli inner membrane proteome.</title>
        <authorList>
            <person name="Daley D.O."/>
            <person name="Rapp M."/>
            <person name="Granseth E."/>
            <person name="Melen K."/>
            <person name="Drew D."/>
            <person name="von Heijne G."/>
        </authorList>
    </citation>
    <scope>SUBCELLULAR LOCATION</scope>
    <source>
        <strain>K12 / MG1655 / ATCC 47076</strain>
    </source>
</reference>
<accession>P42911</accession>
<accession>Q2M970</accession>
<protein>
    <recommendedName>
        <fullName>N-acetylgalactosamine permease IID component</fullName>
    </recommendedName>
    <alternativeName>
        <fullName>EIID-Aga</fullName>
    </alternativeName>
    <alternativeName>
        <fullName>PTS system N-acetylgalactosamine-specific EIID component</fullName>
    </alternativeName>
</protein>
<dbReference type="EMBL" id="AF228498">
    <property type="protein sequence ID" value="AAF81092.1"/>
    <property type="molecule type" value="Genomic_DNA"/>
</dbReference>
<dbReference type="EMBL" id="U18997">
    <property type="protein sequence ID" value="AAA57943.1"/>
    <property type="status" value="ALT_INIT"/>
    <property type="molecule type" value="Genomic_DNA"/>
</dbReference>
<dbReference type="EMBL" id="U00096">
    <property type="protein sequence ID" value="AAC76174.1"/>
    <property type="molecule type" value="Genomic_DNA"/>
</dbReference>
<dbReference type="EMBL" id="AP009048">
    <property type="protein sequence ID" value="BAE77186.1"/>
    <property type="molecule type" value="Genomic_DNA"/>
</dbReference>
<dbReference type="PIR" id="H65103">
    <property type="entry name" value="H65103"/>
</dbReference>
<dbReference type="RefSeq" id="NP_417609.1">
    <property type="nucleotide sequence ID" value="NC_000913.3"/>
</dbReference>
<dbReference type="RefSeq" id="WP_000534347.1">
    <property type="nucleotide sequence ID" value="NZ_LN832404.1"/>
</dbReference>
<dbReference type="SMR" id="P42911"/>
<dbReference type="BioGRID" id="4261993">
    <property type="interactions" value="10"/>
</dbReference>
<dbReference type="FunCoup" id="P42911">
    <property type="interactions" value="249"/>
</dbReference>
<dbReference type="IntAct" id="P42911">
    <property type="interactions" value="2"/>
</dbReference>
<dbReference type="STRING" id="511145.b3140"/>
<dbReference type="TCDB" id="4.A.6.1.5">
    <property type="family name" value="the pts mannose-fructose-sorbose (man) family"/>
</dbReference>
<dbReference type="PaxDb" id="511145-b3140"/>
<dbReference type="EnsemblBacteria" id="AAC76174">
    <property type="protein sequence ID" value="AAC76174"/>
    <property type="gene ID" value="b3140"/>
</dbReference>
<dbReference type="GeneID" id="947649"/>
<dbReference type="KEGG" id="ecj:JW3109"/>
<dbReference type="KEGG" id="eco:b3140"/>
<dbReference type="KEGG" id="ecoc:C3026_17110"/>
<dbReference type="PATRIC" id="fig|1411691.4.peg.3590"/>
<dbReference type="EchoBASE" id="EB2624"/>
<dbReference type="eggNOG" id="COG3716">
    <property type="taxonomic scope" value="Bacteria"/>
</dbReference>
<dbReference type="HOGENOM" id="CLU_060742_1_0_6"/>
<dbReference type="InParanoid" id="P42911"/>
<dbReference type="OMA" id="SEQMAIV"/>
<dbReference type="OrthoDB" id="9811533at2"/>
<dbReference type="PhylomeDB" id="P42911"/>
<dbReference type="BioCyc" id="EcoCyc:AGAD-MONOMER"/>
<dbReference type="PRO" id="PR:P42911"/>
<dbReference type="Proteomes" id="UP000000625">
    <property type="component" value="Chromosome"/>
</dbReference>
<dbReference type="GO" id="GO:0005886">
    <property type="term" value="C:plasma membrane"/>
    <property type="evidence" value="ECO:0000314"/>
    <property type="project" value="EcoCyc"/>
</dbReference>
<dbReference type="GO" id="GO:0009401">
    <property type="term" value="P:phosphoenolpyruvate-dependent sugar phosphotransferase system"/>
    <property type="evidence" value="ECO:0000318"/>
    <property type="project" value="GO_Central"/>
</dbReference>
<dbReference type="InterPro" id="IPR050303">
    <property type="entry name" value="GatZ_KbaZ_carbometab"/>
</dbReference>
<dbReference type="InterPro" id="IPR004704">
    <property type="entry name" value="PTS_IID_man"/>
</dbReference>
<dbReference type="NCBIfam" id="TIGR00828">
    <property type="entry name" value="EIID-AGA"/>
    <property type="match status" value="1"/>
</dbReference>
<dbReference type="NCBIfam" id="NF007359">
    <property type="entry name" value="PRK09855.1"/>
    <property type="match status" value="1"/>
</dbReference>
<dbReference type="PANTHER" id="PTHR32502">
    <property type="entry name" value="N-ACETYLGALACTOSAMINE PERMEASE II COMPONENT-RELATED"/>
    <property type="match status" value="1"/>
</dbReference>
<dbReference type="PANTHER" id="PTHR32502:SF5">
    <property type="entry name" value="N-ACETYLGALACTOSAMINE PERMEASE IID COMPONENT-RELATED"/>
    <property type="match status" value="1"/>
</dbReference>
<dbReference type="Pfam" id="PF03613">
    <property type="entry name" value="EIID-AGA"/>
    <property type="match status" value="1"/>
</dbReference>
<dbReference type="PROSITE" id="PS51108">
    <property type="entry name" value="PTS_EIID"/>
    <property type="match status" value="1"/>
</dbReference>
<organism>
    <name type="scientific">Escherichia coli (strain K12)</name>
    <dbReference type="NCBI Taxonomy" id="83333"/>
    <lineage>
        <taxon>Bacteria</taxon>
        <taxon>Pseudomonadati</taxon>
        <taxon>Pseudomonadota</taxon>
        <taxon>Gammaproteobacteria</taxon>
        <taxon>Enterobacterales</taxon>
        <taxon>Enterobacteriaceae</taxon>
        <taxon>Escherichia</taxon>
    </lineage>
</organism>
<proteinExistence type="inferred from homology"/>
<feature type="chain" id="PRO_0000186662" description="N-acetylgalactosamine permease IID component">
    <location>
        <begin position="1"/>
        <end position="263"/>
    </location>
</feature>
<feature type="transmembrane region" description="Helical" evidence="1">
    <location>
        <begin position="61"/>
        <end position="81"/>
    </location>
</feature>
<feature type="transmembrane region" description="Helical" evidence="1">
    <location>
        <begin position="98"/>
        <end position="118"/>
    </location>
</feature>
<feature type="transmembrane region" description="Helical" evidence="1">
    <location>
        <begin position="131"/>
        <end position="151"/>
    </location>
</feature>
<feature type="transmembrane region" description="Helical" evidence="1">
    <location>
        <begin position="178"/>
        <end position="198"/>
    </location>
</feature>
<feature type="transmembrane region" description="Helical" evidence="1">
    <location>
        <begin position="215"/>
        <end position="235"/>
    </location>
</feature>
<feature type="transmembrane region" description="Helical" evidence="1">
    <location>
        <begin position="243"/>
        <end position="263"/>
    </location>
</feature>
<feature type="domain" description="PTS EIID" evidence="1">
    <location>
        <begin position="3"/>
        <end position="263"/>
    </location>
</feature>
<comment type="function">
    <text>The phosphoenolpyruvate-dependent sugar phosphotransferase system (PTS), a major carbohydrate active -transport system, catalyzes the phosphorylation of incoming sugar substrates concomitant with their translocation across the cell membrane. This system is involved in N-acetylgalactosamine transport.</text>
</comment>
<comment type="subcellular location">
    <subcellularLocation>
        <location evidence="1 2">Cell inner membrane</location>
        <topology evidence="1 2">Multi-pass membrane protein</topology>
    </subcellularLocation>
</comment>
<comment type="domain">
    <text>The EIID domain, with its homologous EIIC domain, forms the PTS system translocation channel and contains part of its specific substrate-binding site.</text>
</comment>
<comment type="sequence caution" evidence="3">
    <conflict type="erroneous initiation">
        <sequence resource="EMBL-CDS" id="AAA57943"/>
    </conflict>
</comment>
<name>PTPD_ECOLI</name>
<gene>
    <name type="primary">agaD</name>
    <name type="synonym">yraF</name>
    <name type="ordered locus">b3140</name>
    <name type="ordered locus">JW3109</name>
</gene>
<sequence>MGSEISKKDITRLGFRSSLLQASFNYERMQAGGFTWAMLPILKKIYKDDKPGLSAAMKDNLEFINTHPNLVGFLMGLLISMEEKGENRDTIKGLKVALFGPIAGIGDAIFWFTLLPIMAGICSSFASQGNLLGPILFFAVYLLIFFLRVGWTHVGYSVGVKAIDKVRENSQMIARSATILGITVIGGLIASYVHINVVTSFAIDNTHSVALQQDFFDKVFPNILPMAYTLLMYYFLRVKKAHPVLLIGVTFVLSIVCSAFGIL</sequence>
<keyword id="KW-0997">Cell inner membrane</keyword>
<keyword id="KW-1003">Cell membrane</keyword>
<keyword id="KW-0472">Membrane</keyword>
<keyword id="KW-0598">Phosphotransferase system</keyword>
<keyword id="KW-1185">Reference proteome</keyword>
<keyword id="KW-0762">Sugar transport</keyword>
<keyword id="KW-0812">Transmembrane</keyword>
<keyword id="KW-1133">Transmembrane helix</keyword>
<keyword id="KW-0813">Transport</keyword>
<evidence type="ECO:0000255" key="1">
    <source>
        <dbReference type="PROSITE-ProRule" id="PRU00431"/>
    </source>
</evidence>
<evidence type="ECO:0000269" key="2">
    <source>
    </source>
</evidence>
<evidence type="ECO:0000305" key="3"/>